<gene>
    <name evidence="8" type="primary">Abtb1</name>
    <name type="synonym">Bpoz</name>
</gene>
<proteinExistence type="evidence at transcript level"/>
<feature type="chain" id="PRO_0000248268" description="Ankyrin repeat and BTB/POZ domain-containing protein 1">
    <location>
        <begin position="1"/>
        <end position="478"/>
    </location>
</feature>
<feature type="repeat" description="ANK 1" evidence="2">
    <location>
        <begin position="1"/>
        <end position="31"/>
    </location>
</feature>
<feature type="repeat" description="ANK 2" evidence="2">
    <location>
        <begin position="35"/>
        <end position="64"/>
    </location>
</feature>
<feature type="domain" description="BTB 1" evidence="3">
    <location>
        <begin position="115"/>
        <end position="182"/>
    </location>
</feature>
<feature type="domain" description="BTB 2" evidence="3">
    <location>
        <begin position="272"/>
        <end position="346"/>
    </location>
</feature>
<feature type="coiled-coil region" evidence="2">
    <location>
        <begin position="451"/>
        <end position="477"/>
    </location>
</feature>
<feature type="sequence conflict" description="In Ref. 2; BAC40352." evidence="4" ref="2">
    <original>T</original>
    <variation>A</variation>
    <location>
        <position position="92"/>
    </location>
</feature>
<feature type="sequence conflict" description="In Ref. 1; BAB55652." evidence="4" ref="1">
    <original>H</original>
    <variation>Y</variation>
    <location>
        <position position="286"/>
    </location>
</feature>
<protein>
    <recommendedName>
        <fullName>Ankyrin repeat and BTB/POZ domain-containing protein 1</fullName>
    </recommendedName>
</protein>
<dbReference type="EMBL" id="AB053477">
    <property type="protein sequence ID" value="BAB55652.1"/>
    <property type="molecule type" value="mRNA"/>
</dbReference>
<dbReference type="EMBL" id="AK088437">
    <property type="protein sequence ID" value="BAC40352.1"/>
    <property type="molecule type" value="mRNA"/>
</dbReference>
<dbReference type="EMBL" id="BC003234">
    <property type="protein sequence ID" value="AAH03234.1"/>
    <property type="molecule type" value="mRNA"/>
</dbReference>
<dbReference type="CCDS" id="CCDS20339.1"/>
<dbReference type="RefSeq" id="NP_084527.2">
    <property type="nucleotide sequence ID" value="NM_030251.3"/>
</dbReference>
<dbReference type="SMR" id="Q99LJ2"/>
<dbReference type="BioGRID" id="219771">
    <property type="interactions" value="3"/>
</dbReference>
<dbReference type="FunCoup" id="Q99LJ2">
    <property type="interactions" value="125"/>
</dbReference>
<dbReference type="IntAct" id="Q99LJ2">
    <property type="interactions" value="3"/>
</dbReference>
<dbReference type="STRING" id="10090.ENSMUSP00000032169"/>
<dbReference type="iPTMnet" id="Q99LJ2"/>
<dbReference type="PhosphoSitePlus" id="Q99LJ2"/>
<dbReference type="PaxDb" id="10090-ENSMUSP00000032169"/>
<dbReference type="ProteomicsDB" id="286025"/>
<dbReference type="DNASU" id="80283"/>
<dbReference type="GeneID" id="80283"/>
<dbReference type="KEGG" id="mmu:80283"/>
<dbReference type="UCSC" id="uc009cvs.2">
    <property type="organism name" value="mouse"/>
</dbReference>
<dbReference type="AGR" id="MGI:1933148"/>
<dbReference type="CTD" id="80325"/>
<dbReference type="MGI" id="MGI:1933148">
    <property type="gene designation" value="Abtb1"/>
</dbReference>
<dbReference type="eggNOG" id="KOG0511">
    <property type="taxonomic scope" value="Eukaryota"/>
</dbReference>
<dbReference type="InParanoid" id="Q99LJ2"/>
<dbReference type="OrthoDB" id="684045at2759"/>
<dbReference type="PhylomeDB" id="Q99LJ2"/>
<dbReference type="TreeFam" id="TF329194"/>
<dbReference type="BioGRID-ORCS" id="80283">
    <property type="hits" value="2 hits in 77 CRISPR screens"/>
</dbReference>
<dbReference type="PRO" id="PR:Q99LJ2"/>
<dbReference type="Proteomes" id="UP000000589">
    <property type="component" value="Unplaced"/>
</dbReference>
<dbReference type="RNAct" id="Q99LJ2">
    <property type="molecule type" value="protein"/>
</dbReference>
<dbReference type="GO" id="GO:0005737">
    <property type="term" value="C:cytoplasm"/>
    <property type="evidence" value="ECO:0007669"/>
    <property type="project" value="UniProtKB-SubCell"/>
</dbReference>
<dbReference type="GO" id="GO:0003746">
    <property type="term" value="F:translation elongation factor activity"/>
    <property type="evidence" value="ECO:0007669"/>
    <property type="project" value="UniProtKB-KW"/>
</dbReference>
<dbReference type="CDD" id="cd18497">
    <property type="entry name" value="BACK_ABTB1_BPOZ"/>
    <property type="match status" value="1"/>
</dbReference>
<dbReference type="CDD" id="cd18295">
    <property type="entry name" value="BTB1_POZ_ABTB1_BPOZ1"/>
    <property type="match status" value="1"/>
</dbReference>
<dbReference type="CDD" id="cd18296">
    <property type="entry name" value="BTB2_POZ_ABTB1_BPOZ1"/>
    <property type="match status" value="1"/>
</dbReference>
<dbReference type="FunFam" id="1.25.40.20:FF:000115">
    <property type="entry name" value="Ankyrin repeat and BTB/POZ domain-containing protein 1"/>
    <property type="match status" value="1"/>
</dbReference>
<dbReference type="FunFam" id="3.30.710.10:FF:000063">
    <property type="entry name" value="Ankyrin repeat and BTB/POZ domain-containing protein 1"/>
    <property type="match status" value="1"/>
</dbReference>
<dbReference type="FunFam" id="3.30.710.10:FF:000064">
    <property type="entry name" value="Ankyrin repeat and BTB/POZ domain-containing protein 1"/>
    <property type="match status" value="1"/>
</dbReference>
<dbReference type="Gene3D" id="1.25.40.20">
    <property type="entry name" value="Ankyrin repeat-containing domain"/>
    <property type="match status" value="1"/>
</dbReference>
<dbReference type="Gene3D" id="3.30.710.10">
    <property type="entry name" value="Potassium Channel Kv1.1, Chain A"/>
    <property type="match status" value="2"/>
</dbReference>
<dbReference type="InterPro" id="IPR044515">
    <property type="entry name" value="ABTB1"/>
</dbReference>
<dbReference type="InterPro" id="IPR002110">
    <property type="entry name" value="Ankyrin_rpt"/>
</dbReference>
<dbReference type="InterPro" id="IPR036770">
    <property type="entry name" value="Ankyrin_rpt-contain_sf"/>
</dbReference>
<dbReference type="InterPro" id="IPR000210">
    <property type="entry name" value="BTB/POZ_dom"/>
</dbReference>
<dbReference type="InterPro" id="IPR011333">
    <property type="entry name" value="SKP1/BTB/POZ_sf"/>
</dbReference>
<dbReference type="PANTHER" id="PTHR46231">
    <property type="entry name" value="ANKYRIN REPEAT AND BTB/POZ DOMAIN-CONTAINING PROTEIN 1"/>
    <property type="match status" value="1"/>
</dbReference>
<dbReference type="PANTHER" id="PTHR46231:SF1">
    <property type="entry name" value="ANKYRIN REPEAT AND BTB_POZ DOMAIN-CONTAINING PROTEIN 1"/>
    <property type="match status" value="1"/>
</dbReference>
<dbReference type="Pfam" id="PF12796">
    <property type="entry name" value="Ank_2"/>
    <property type="match status" value="1"/>
</dbReference>
<dbReference type="Pfam" id="PF00651">
    <property type="entry name" value="BTB"/>
    <property type="match status" value="2"/>
</dbReference>
<dbReference type="SMART" id="SM00248">
    <property type="entry name" value="ANK"/>
    <property type="match status" value="2"/>
</dbReference>
<dbReference type="SMART" id="SM00225">
    <property type="entry name" value="BTB"/>
    <property type="match status" value="2"/>
</dbReference>
<dbReference type="SUPFAM" id="SSF48403">
    <property type="entry name" value="Ankyrin repeat"/>
    <property type="match status" value="1"/>
</dbReference>
<dbReference type="SUPFAM" id="SSF54695">
    <property type="entry name" value="POZ domain"/>
    <property type="match status" value="2"/>
</dbReference>
<dbReference type="PROSITE" id="PS50297">
    <property type="entry name" value="ANK_REP_REGION"/>
    <property type="match status" value="1"/>
</dbReference>
<dbReference type="PROSITE" id="PS50088">
    <property type="entry name" value="ANK_REPEAT"/>
    <property type="match status" value="1"/>
</dbReference>
<dbReference type="PROSITE" id="PS50097">
    <property type="entry name" value="BTB"/>
    <property type="match status" value="2"/>
</dbReference>
<reference evidence="6" key="1">
    <citation type="journal article" date="2001" name="Oncogene">
        <title>Growth-suppressive effects of BPOZ and EGR2, two genes involved in the PTEN signaling pathway.</title>
        <authorList>
            <person name="Unoki M."/>
            <person name="Nakamura Y."/>
        </authorList>
    </citation>
    <scope>NUCLEOTIDE SEQUENCE [MRNA]</scope>
    <source>
        <strain evidence="6">C57BL/6NJcl</strain>
        <tissue evidence="6">Lung</tissue>
    </source>
</reference>
<reference evidence="7" key="2">
    <citation type="journal article" date="2005" name="Science">
        <title>The transcriptional landscape of the mammalian genome.</title>
        <authorList>
            <person name="Carninci P."/>
            <person name="Kasukawa T."/>
            <person name="Katayama S."/>
            <person name="Gough J."/>
            <person name="Frith M.C."/>
            <person name="Maeda N."/>
            <person name="Oyama R."/>
            <person name="Ravasi T."/>
            <person name="Lenhard B."/>
            <person name="Wells C."/>
            <person name="Kodzius R."/>
            <person name="Shimokawa K."/>
            <person name="Bajic V.B."/>
            <person name="Brenner S.E."/>
            <person name="Batalov S."/>
            <person name="Forrest A.R."/>
            <person name="Zavolan M."/>
            <person name="Davis M.J."/>
            <person name="Wilming L.G."/>
            <person name="Aidinis V."/>
            <person name="Allen J.E."/>
            <person name="Ambesi-Impiombato A."/>
            <person name="Apweiler R."/>
            <person name="Aturaliya R.N."/>
            <person name="Bailey T.L."/>
            <person name="Bansal M."/>
            <person name="Baxter L."/>
            <person name="Beisel K.W."/>
            <person name="Bersano T."/>
            <person name="Bono H."/>
            <person name="Chalk A.M."/>
            <person name="Chiu K.P."/>
            <person name="Choudhary V."/>
            <person name="Christoffels A."/>
            <person name="Clutterbuck D.R."/>
            <person name="Crowe M.L."/>
            <person name="Dalla E."/>
            <person name="Dalrymple B.P."/>
            <person name="de Bono B."/>
            <person name="Della Gatta G."/>
            <person name="di Bernardo D."/>
            <person name="Down T."/>
            <person name="Engstrom P."/>
            <person name="Fagiolini M."/>
            <person name="Faulkner G."/>
            <person name="Fletcher C.F."/>
            <person name="Fukushima T."/>
            <person name="Furuno M."/>
            <person name="Futaki S."/>
            <person name="Gariboldi M."/>
            <person name="Georgii-Hemming P."/>
            <person name="Gingeras T.R."/>
            <person name="Gojobori T."/>
            <person name="Green R.E."/>
            <person name="Gustincich S."/>
            <person name="Harbers M."/>
            <person name="Hayashi Y."/>
            <person name="Hensch T.K."/>
            <person name="Hirokawa N."/>
            <person name="Hill D."/>
            <person name="Huminiecki L."/>
            <person name="Iacono M."/>
            <person name="Ikeo K."/>
            <person name="Iwama A."/>
            <person name="Ishikawa T."/>
            <person name="Jakt M."/>
            <person name="Kanapin A."/>
            <person name="Katoh M."/>
            <person name="Kawasawa Y."/>
            <person name="Kelso J."/>
            <person name="Kitamura H."/>
            <person name="Kitano H."/>
            <person name="Kollias G."/>
            <person name="Krishnan S.P."/>
            <person name="Kruger A."/>
            <person name="Kummerfeld S.K."/>
            <person name="Kurochkin I.V."/>
            <person name="Lareau L.F."/>
            <person name="Lazarevic D."/>
            <person name="Lipovich L."/>
            <person name="Liu J."/>
            <person name="Liuni S."/>
            <person name="McWilliam S."/>
            <person name="Madan Babu M."/>
            <person name="Madera M."/>
            <person name="Marchionni L."/>
            <person name="Matsuda H."/>
            <person name="Matsuzawa S."/>
            <person name="Miki H."/>
            <person name="Mignone F."/>
            <person name="Miyake S."/>
            <person name="Morris K."/>
            <person name="Mottagui-Tabar S."/>
            <person name="Mulder N."/>
            <person name="Nakano N."/>
            <person name="Nakauchi H."/>
            <person name="Ng P."/>
            <person name="Nilsson R."/>
            <person name="Nishiguchi S."/>
            <person name="Nishikawa S."/>
            <person name="Nori F."/>
            <person name="Ohara O."/>
            <person name="Okazaki Y."/>
            <person name="Orlando V."/>
            <person name="Pang K.C."/>
            <person name="Pavan W.J."/>
            <person name="Pavesi G."/>
            <person name="Pesole G."/>
            <person name="Petrovsky N."/>
            <person name="Piazza S."/>
            <person name="Reed J."/>
            <person name="Reid J.F."/>
            <person name="Ring B.Z."/>
            <person name="Ringwald M."/>
            <person name="Rost B."/>
            <person name="Ruan Y."/>
            <person name="Salzberg S.L."/>
            <person name="Sandelin A."/>
            <person name="Schneider C."/>
            <person name="Schoenbach C."/>
            <person name="Sekiguchi K."/>
            <person name="Semple C.A."/>
            <person name="Seno S."/>
            <person name="Sessa L."/>
            <person name="Sheng Y."/>
            <person name="Shibata Y."/>
            <person name="Shimada H."/>
            <person name="Shimada K."/>
            <person name="Silva D."/>
            <person name="Sinclair B."/>
            <person name="Sperling S."/>
            <person name="Stupka E."/>
            <person name="Sugiura K."/>
            <person name="Sultana R."/>
            <person name="Takenaka Y."/>
            <person name="Taki K."/>
            <person name="Tammoja K."/>
            <person name="Tan S.L."/>
            <person name="Tang S."/>
            <person name="Taylor M.S."/>
            <person name="Tegner J."/>
            <person name="Teichmann S.A."/>
            <person name="Ueda H.R."/>
            <person name="van Nimwegen E."/>
            <person name="Verardo R."/>
            <person name="Wei C.L."/>
            <person name="Yagi K."/>
            <person name="Yamanishi H."/>
            <person name="Zabarovsky E."/>
            <person name="Zhu S."/>
            <person name="Zimmer A."/>
            <person name="Hide W."/>
            <person name="Bult C."/>
            <person name="Grimmond S.M."/>
            <person name="Teasdale R.D."/>
            <person name="Liu E.T."/>
            <person name="Brusic V."/>
            <person name="Quackenbush J."/>
            <person name="Wahlestedt C."/>
            <person name="Mattick J.S."/>
            <person name="Hume D.A."/>
            <person name="Kai C."/>
            <person name="Sasaki D."/>
            <person name="Tomaru Y."/>
            <person name="Fukuda S."/>
            <person name="Kanamori-Katayama M."/>
            <person name="Suzuki M."/>
            <person name="Aoki J."/>
            <person name="Arakawa T."/>
            <person name="Iida J."/>
            <person name="Imamura K."/>
            <person name="Itoh M."/>
            <person name="Kato T."/>
            <person name="Kawaji H."/>
            <person name="Kawagashira N."/>
            <person name="Kawashima T."/>
            <person name="Kojima M."/>
            <person name="Kondo S."/>
            <person name="Konno H."/>
            <person name="Nakano K."/>
            <person name="Ninomiya N."/>
            <person name="Nishio T."/>
            <person name="Okada M."/>
            <person name="Plessy C."/>
            <person name="Shibata K."/>
            <person name="Shiraki T."/>
            <person name="Suzuki S."/>
            <person name="Tagami M."/>
            <person name="Waki K."/>
            <person name="Watahiki A."/>
            <person name="Okamura-Oho Y."/>
            <person name="Suzuki H."/>
            <person name="Kawai J."/>
            <person name="Hayashizaki Y."/>
        </authorList>
    </citation>
    <scope>NUCLEOTIDE SEQUENCE [LARGE SCALE MRNA]</scope>
    <source>
        <strain evidence="7">NOD</strain>
        <tissue evidence="7">Thymus</tissue>
    </source>
</reference>
<reference evidence="5" key="3">
    <citation type="journal article" date="2004" name="Genome Res.">
        <title>The status, quality, and expansion of the NIH full-length cDNA project: the Mammalian Gene Collection (MGC).</title>
        <authorList>
            <consortium name="The MGC Project Team"/>
        </authorList>
    </citation>
    <scope>NUCLEOTIDE SEQUENCE [LARGE SCALE MRNA]</scope>
    <source>
        <tissue evidence="5">Mammary gland</tissue>
    </source>
</reference>
<sequence length="478" mass="54058">MDTSDLFASCRKGDVGRVRYLLEQRDVEVNVRDKWDSTPLYYACLCGHEELVRYLLANGARCEANTFDGERCLYGALSDPIRRALRDYKQVTASCRRRDYYDDFLQRLLEQGIHSDVVFVVHGKPFRAHRCILGARSTYFANMLDTKWKGKSVVVLRHPLINPVAFGALLQYLYTGRLDIGVEHVSDCERLAKQCQLWDLLDDLEAKCEKVSEFVASKPGTCVKVLTIEPPPADPRLRADMALLADCALPSELRGDLGELPFPCPDGFSSCPDICFRVADSSFLCHKAFFCGRSDYFRALLDDHFQESEEPAASGDPPVVTLHDISPDIFIHVLYYVYSDHTELPPELAYDVLSVADMYLLPGLKRLCGRSLAQLLEEDSVVGVWRIAKMFRLARLEDQCTEYMAKVIEKLVEREDFVEAVREEAAAVAARQETDSIPLVDDIRFHVASTVQTYSAIEEAQQRLRALEDLLVSIGLDC</sequence>
<keyword id="KW-0040">ANK repeat</keyword>
<keyword id="KW-0175">Coiled coil</keyword>
<keyword id="KW-0963">Cytoplasm</keyword>
<keyword id="KW-0251">Elongation factor</keyword>
<keyword id="KW-0648">Protein biosynthesis</keyword>
<keyword id="KW-1185">Reference proteome</keyword>
<keyword id="KW-0677">Repeat</keyword>
<evidence type="ECO:0000250" key="1">
    <source>
        <dbReference type="UniProtKB" id="Q969K4"/>
    </source>
</evidence>
<evidence type="ECO:0000255" key="2"/>
<evidence type="ECO:0000255" key="3">
    <source>
        <dbReference type="PROSITE-ProRule" id="PRU00037"/>
    </source>
</evidence>
<evidence type="ECO:0000305" key="4"/>
<evidence type="ECO:0000312" key="5">
    <source>
        <dbReference type="EMBL" id="AAH03234.1"/>
    </source>
</evidence>
<evidence type="ECO:0000312" key="6">
    <source>
        <dbReference type="EMBL" id="BAB55652.1"/>
    </source>
</evidence>
<evidence type="ECO:0000312" key="7">
    <source>
        <dbReference type="EMBL" id="BAC40352.1"/>
    </source>
</evidence>
<evidence type="ECO:0000312" key="8">
    <source>
        <dbReference type="MGI" id="MGI:1933148"/>
    </source>
</evidence>
<accession>Q99LJ2</accession>
<accession>Q8C2K7</accession>
<accession>Q91XU4</accession>
<organism>
    <name type="scientific">Mus musculus</name>
    <name type="common">Mouse</name>
    <dbReference type="NCBI Taxonomy" id="10090"/>
    <lineage>
        <taxon>Eukaryota</taxon>
        <taxon>Metazoa</taxon>
        <taxon>Chordata</taxon>
        <taxon>Craniata</taxon>
        <taxon>Vertebrata</taxon>
        <taxon>Euteleostomi</taxon>
        <taxon>Mammalia</taxon>
        <taxon>Eutheria</taxon>
        <taxon>Euarchontoglires</taxon>
        <taxon>Glires</taxon>
        <taxon>Rodentia</taxon>
        <taxon>Myomorpha</taxon>
        <taxon>Muroidea</taxon>
        <taxon>Muridae</taxon>
        <taxon>Murinae</taxon>
        <taxon>Mus</taxon>
        <taxon>Mus</taxon>
    </lineage>
</organism>
<comment type="function">
    <text evidence="1">May act as a mediator of the PTEN growth-suppressive signaling pathway. May play a role in developmental processes (By similarity).</text>
</comment>
<comment type="subcellular location">
    <subcellularLocation>
        <location evidence="1">Cytoplasm</location>
    </subcellularLocation>
</comment>
<name>ABTB1_MOUSE</name>